<proteinExistence type="evidence at protein level"/>
<keyword id="KW-0002">3D-structure</keyword>
<keyword id="KW-0007">Acetylation</keyword>
<keyword id="KW-0025">Alternative splicing</keyword>
<keyword id="KW-0963">Cytoplasm</keyword>
<keyword id="KW-0440">LIM domain</keyword>
<keyword id="KW-0479">Metal-binding</keyword>
<keyword id="KW-0488">Methylation</keyword>
<keyword id="KW-0597">Phosphoprotein</keyword>
<keyword id="KW-1267">Proteomics identification</keyword>
<keyword id="KW-1185">Reference proteome</keyword>
<keyword id="KW-0677">Repeat</keyword>
<keyword id="KW-0862">Zinc</keyword>
<evidence type="ECO:0000250" key="1"/>
<evidence type="ECO:0000250" key="2">
    <source>
        <dbReference type="UniProtKB" id="Q69ZX8"/>
    </source>
</evidence>
<evidence type="ECO:0000255" key="3">
    <source>
        <dbReference type="PROSITE-ProRule" id="PRU00125"/>
    </source>
</evidence>
<evidence type="ECO:0000255" key="4">
    <source>
        <dbReference type="PROSITE-ProRule" id="PRU00595"/>
    </source>
</evidence>
<evidence type="ECO:0000256" key="5">
    <source>
        <dbReference type="SAM" id="MobiDB-lite"/>
    </source>
</evidence>
<evidence type="ECO:0000269" key="6">
    <source>
    </source>
</evidence>
<evidence type="ECO:0000303" key="7">
    <source>
    </source>
</evidence>
<evidence type="ECO:0000303" key="8">
    <source>
    </source>
</evidence>
<evidence type="ECO:0000303" key="9">
    <source>
    </source>
</evidence>
<evidence type="ECO:0000303" key="10">
    <source>
    </source>
</evidence>
<evidence type="ECO:0000305" key="11"/>
<evidence type="ECO:0007744" key="12">
    <source>
    </source>
</evidence>
<evidence type="ECO:0007744" key="13">
    <source>
    </source>
</evidence>
<evidence type="ECO:0007744" key="14">
    <source>
    </source>
</evidence>
<evidence type="ECO:0007744" key="15">
    <source>
    </source>
</evidence>
<evidence type="ECO:0007829" key="16">
    <source>
        <dbReference type="PDB" id="1UJS"/>
    </source>
</evidence>
<evidence type="ECO:0007829" key="17">
    <source>
        <dbReference type="PDB" id="2DJ7"/>
    </source>
</evidence>
<organism>
    <name type="scientific">Homo sapiens</name>
    <name type="common">Human</name>
    <dbReference type="NCBI Taxonomy" id="9606"/>
    <lineage>
        <taxon>Eukaryota</taxon>
        <taxon>Metazoa</taxon>
        <taxon>Chordata</taxon>
        <taxon>Craniata</taxon>
        <taxon>Vertebrata</taxon>
        <taxon>Euteleostomi</taxon>
        <taxon>Mammalia</taxon>
        <taxon>Eutheria</taxon>
        <taxon>Euarchontoglires</taxon>
        <taxon>Primates</taxon>
        <taxon>Haplorrhini</taxon>
        <taxon>Catarrhini</taxon>
        <taxon>Hominidae</taxon>
        <taxon>Homo</taxon>
    </lineage>
</organism>
<reference key="1">
    <citation type="journal article" date="2007" name="J. Biol. Chem.">
        <title>Two novel members of the ABLIM protein family, ABLIM-2 and -3, associate with STARS and directly bind F-actin.</title>
        <authorList>
            <person name="Barrientos T."/>
            <person name="Frank D."/>
            <person name="Kuwahara K."/>
            <person name="Bezprozvannaya S."/>
            <person name="Pipes G.C.T."/>
            <person name="Bassel-Duby R."/>
            <person name="Richardson J.A."/>
            <person name="Katus H.A."/>
            <person name="Olson E.N."/>
            <person name="Frey N."/>
        </authorList>
    </citation>
    <scope>NUCLEOTIDE SEQUENCE [MRNA] (ISOFORM 3)</scope>
    <scope>FUNCTION</scope>
    <scope>TISSUE SPECIFICITY</scope>
    <scope>INTERACTION WITH F-ACTIN AND ABRA</scope>
    <source>
        <tissue>Heart</tissue>
    </source>
</reference>
<reference key="2">
    <citation type="journal article" date="1998" name="DNA Res.">
        <title>Prediction of the coding sequences of unidentified human genes. XII. The complete sequences of 100 new cDNA clones from brain which code for large proteins in vitro.</title>
        <authorList>
            <person name="Nagase T."/>
            <person name="Ishikawa K."/>
            <person name="Suyama M."/>
            <person name="Kikuno R."/>
            <person name="Hirosawa M."/>
            <person name="Miyajima N."/>
            <person name="Tanaka A."/>
            <person name="Kotani H."/>
            <person name="Nomura N."/>
            <person name="Ohara O."/>
        </authorList>
    </citation>
    <scope>NUCLEOTIDE SEQUENCE [LARGE SCALE MRNA] (ISOFORM 1)</scope>
    <source>
        <tissue>Brain</tissue>
    </source>
</reference>
<reference key="3">
    <citation type="journal article" date="2004" name="Nat. Genet.">
        <title>Complete sequencing and characterization of 21,243 full-length human cDNAs.</title>
        <authorList>
            <person name="Ota T."/>
            <person name="Suzuki Y."/>
            <person name="Nishikawa T."/>
            <person name="Otsuki T."/>
            <person name="Sugiyama T."/>
            <person name="Irie R."/>
            <person name="Wakamatsu A."/>
            <person name="Hayashi K."/>
            <person name="Sato H."/>
            <person name="Nagai K."/>
            <person name="Kimura K."/>
            <person name="Makita H."/>
            <person name="Sekine M."/>
            <person name="Obayashi M."/>
            <person name="Nishi T."/>
            <person name="Shibahara T."/>
            <person name="Tanaka T."/>
            <person name="Ishii S."/>
            <person name="Yamamoto J."/>
            <person name="Saito K."/>
            <person name="Kawai Y."/>
            <person name="Isono Y."/>
            <person name="Nakamura Y."/>
            <person name="Nagahari K."/>
            <person name="Murakami K."/>
            <person name="Yasuda T."/>
            <person name="Iwayanagi T."/>
            <person name="Wagatsuma M."/>
            <person name="Shiratori A."/>
            <person name="Sudo H."/>
            <person name="Hosoiri T."/>
            <person name="Kaku Y."/>
            <person name="Kodaira H."/>
            <person name="Kondo H."/>
            <person name="Sugawara M."/>
            <person name="Takahashi M."/>
            <person name="Kanda K."/>
            <person name="Yokoi T."/>
            <person name="Furuya T."/>
            <person name="Kikkawa E."/>
            <person name="Omura Y."/>
            <person name="Abe K."/>
            <person name="Kamihara K."/>
            <person name="Katsuta N."/>
            <person name="Sato K."/>
            <person name="Tanikawa M."/>
            <person name="Yamazaki M."/>
            <person name="Ninomiya K."/>
            <person name="Ishibashi T."/>
            <person name="Yamashita H."/>
            <person name="Murakawa K."/>
            <person name="Fujimori K."/>
            <person name="Tanai H."/>
            <person name="Kimata M."/>
            <person name="Watanabe M."/>
            <person name="Hiraoka S."/>
            <person name="Chiba Y."/>
            <person name="Ishida S."/>
            <person name="Ono Y."/>
            <person name="Takiguchi S."/>
            <person name="Watanabe S."/>
            <person name="Yosida M."/>
            <person name="Hotuta T."/>
            <person name="Kusano J."/>
            <person name="Kanehori K."/>
            <person name="Takahashi-Fujii A."/>
            <person name="Hara H."/>
            <person name="Tanase T.-O."/>
            <person name="Nomura Y."/>
            <person name="Togiya S."/>
            <person name="Komai F."/>
            <person name="Hara R."/>
            <person name="Takeuchi K."/>
            <person name="Arita M."/>
            <person name="Imose N."/>
            <person name="Musashino K."/>
            <person name="Yuuki H."/>
            <person name="Oshima A."/>
            <person name="Sasaki N."/>
            <person name="Aotsuka S."/>
            <person name="Yoshikawa Y."/>
            <person name="Matsunawa H."/>
            <person name="Ichihara T."/>
            <person name="Shiohata N."/>
            <person name="Sano S."/>
            <person name="Moriya S."/>
            <person name="Momiyama H."/>
            <person name="Satoh N."/>
            <person name="Takami S."/>
            <person name="Terashima Y."/>
            <person name="Suzuki O."/>
            <person name="Nakagawa S."/>
            <person name="Senoh A."/>
            <person name="Mizoguchi H."/>
            <person name="Goto Y."/>
            <person name="Shimizu F."/>
            <person name="Wakebe H."/>
            <person name="Hishigaki H."/>
            <person name="Watanabe T."/>
            <person name="Sugiyama A."/>
            <person name="Takemoto M."/>
            <person name="Kawakami B."/>
            <person name="Yamazaki M."/>
            <person name="Watanabe K."/>
            <person name="Kumagai A."/>
            <person name="Itakura S."/>
            <person name="Fukuzumi Y."/>
            <person name="Fujimori Y."/>
            <person name="Komiyama M."/>
            <person name="Tashiro H."/>
            <person name="Tanigami A."/>
            <person name="Fujiwara T."/>
            <person name="Ono T."/>
            <person name="Yamada K."/>
            <person name="Fujii Y."/>
            <person name="Ozaki K."/>
            <person name="Hirao M."/>
            <person name="Ohmori Y."/>
            <person name="Kawabata A."/>
            <person name="Hikiji T."/>
            <person name="Kobatake N."/>
            <person name="Inagaki H."/>
            <person name="Ikema Y."/>
            <person name="Okamoto S."/>
            <person name="Okitani R."/>
            <person name="Kawakami T."/>
            <person name="Noguchi S."/>
            <person name="Itoh T."/>
            <person name="Shigeta K."/>
            <person name="Senba T."/>
            <person name="Matsumura K."/>
            <person name="Nakajima Y."/>
            <person name="Mizuno T."/>
            <person name="Morinaga M."/>
            <person name="Sasaki M."/>
            <person name="Togashi T."/>
            <person name="Oyama M."/>
            <person name="Hata H."/>
            <person name="Watanabe M."/>
            <person name="Komatsu T."/>
            <person name="Mizushima-Sugano J."/>
            <person name="Satoh T."/>
            <person name="Shirai Y."/>
            <person name="Takahashi Y."/>
            <person name="Nakagawa K."/>
            <person name="Okumura K."/>
            <person name="Nagase T."/>
            <person name="Nomura N."/>
            <person name="Kikuchi H."/>
            <person name="Masuho Y."/>
            <person name="Yamashita R."/>
            <person name="Nakai K."/>
            <person name="Yada T."/>
            <person name="Nakamura Y."/>
            <person name="Ohara O."/>
            <person name="Isogai T."/>
            <person name="Sugano S."/>
        </authorList>
    </citation>
    <scope>NUCLEOTIDE SEQUENCE [LARGE SCALE MRNA] (ISOFORM 1)</scope>
</reference>
<reference key="4">
    <citation type="journal article" date="2004" name="Oncogene">
        <title>Expression profiling and differential screening between hepatoblastomas and the corresponding normal livers: identification of high expression of the PLK1 oncogene as a poor-prognostic indicator of hepatoblastomas.</title>
        <authorList>
            <person name="Yamada S."/>
            <person name="Ohira M."/>
            <person name="Horie H."/>
            <person name="Ando K."/>
            <person name="Takayasu H."/>
            <person name="Suzuki Y."/>
            <person name="Sugano S."/>
            <person name="Hirata T."/>
            <person name="Goto T."/>
            <person name="Matsunaga T."/>
            <person name="Hiyama E."/>
            <person name="Hayashi Y."/>
            <person name="Ando H."/>
            <person name="Suita S."/>
            <person name="Kaneko M."/>
            <person name="Sasaki F."/>
            <person name="Hashizume K."/>
            <person name="Ohnuma N."/>
            <person name="Nakagawara A."/>
        </authorList>
    </citation>
    <scope>NUCLEOTIDE SEQUENCE [LARGE SCALE MRNA] (ISOFORM 4)</scope>
    <source>
        <tissue>Hepatoblastoma</tissue>
    </source>
</reference>
<reference key="5">
    <citation type="journal article" date="2004" name="Genome Res.">
        <title>The status, quality, and expansion of the NIH full-length cDNA project: the Mammalian Gene Collection (MGC).</title>
        <authorList>
            <consortium name="The MGC Project Team"/>
        </authorList>
    </citation>
    <scope>NUCLEOTIDE SEQUENCE [LARGE SCALE MRNA] (ISOFORM 2)</scope>
    <source>
        <tissue>Colon</tissue>
    </source>
</reference>
<reference key="6">
    <citation type="journal article" date="2007" name="BMC Genomics">
        <title>The full-ORF clone resource of the German cDNA consortium.</title>
        <authorList>
            <person name="Bechtel S."/>
            <person name="Rosenfelder H."/>
            <person name="Duda A."/>
            <person name="Schmidt C.P."/>
            <person name="Ernst U."/>
            <person name="Wellenreuther R."/>
            <person name="Mehrle A."/>
            <person name="Schuster C."/>
            <person name="Bahr A."/>
            <person name="Bloecker H."/>
            <person name="Heubner D."/>
            <person name="Hoerlein A."/>
            <person name="Michel G."/>
            <person name="Wedler H."/>
            <person name="Koehrer K."/>
            <person name="Ottenwaelder B."/>
            <person name="Poustka A."/>
            <person name="Wiemann S."/>
            <person name="Schupp I."/>
        </authorList>
    </citation>
    <scope>NUCLEOTIDE SEQUENCE [LARGE SCALE MRNA] OF 117-683 (ISOFORM 3)</scope>
    <source>
        <tissue>Stomach</tissue>
    </source>
</reference>
<reference key="7">
    <citation type="journal article" date="2006" name="Cell">
        <title>Global, in vivo, and site-specific phosphorylation dynamics in signaling networks.</title>
        <authorList>
            <person name="Olsen J.V."/>
            <person name="Blagoev B."/>
            <person name="Gnad F."/>
            <person name="Macek B."/>
            <person name="Kumar C."/>
            <person name="Mortensen P."/>
            <person name="Mann M."/>
        </authorList>
    </citation>
    <scope>PHOSPHORYLATION [LARGE SCALE ANALYSIS] AT SER-503 AND SER-504</scope>
    <scope>IDENTIFICATION BY MASS SPECTROMETRY [LARGE SCALE ANALYSIS]</scope>
    <source>
        <tissue>Cervix carcinoma</tissue>
    </source>
</reference>
<reference key="8">
    <citation type="journal article" date="2008" name="J. Proteome Res.">
        <title>Phosphoproteome of resting human platelets.</title>
        <authorList>
            <person name="Zahedi R.P."/>
            <person name="Lewandrowski U."/>
            <person name="Wiesner J."/>
            <person name="Wortelkamp S."/>
            <person name="Moebius J."/>
            <person name="Schuetz C."/>
            <person name="Walter U."/>
            <person name="Gambaryan S."/>
            <person name="Sickmann A."/>
        </authorList>
    </citation>
    <scope>IDENTIFICATION BY MASS SPECTROMETRY [LARGE SCALE ANALYSIS]</scope>
    <source>
        <tissue>Platelet</tissue>
    </source>
</reference>
<reference key="9">
    <citation type="journal article" date="2008" name="Proteomics">
        <title>Large-scale phosphoproteome analysis of human liver tissue by enrichment and fractionation of phosphopeptides with strong anion exchange chromatography.</title>
        <authorList>
            <person name="Han G."/>
            <person name="Ye M."/>
            <person name="Zhou H."/>
            <person name="Jiang X."/>
            <person name="Feng S."/>
            <person name="Jiang X."/>
            <person name="Tian R."/>
            <person name="Wan D."/>
            <person name="Zou H."/>
            <person name="Gu J."/>
        </authorList>
    </citation>
    <scope>PHOSPHORYLATION [LARGE SCALE ANALYSIS] AT SER-503 AND SER-504</scope>
    <scope>IDENTIFICATION BY MASS SPECTROMETRY [LARGE SCALE ANALYSIS]</scope>
    <source>
        <tissue>Liver</tissue>
    </source>
</reference>
<reference key="10">
    <citation type="journal article" date="2012" name="Proc. Natl. Acad. Sci. U.S.A.">
        <title>N-terminal acetylome analyses and functional insights of the N-terminal acetyltransferase NatB.</title>
        <authorList>
            <person name="Van Damme P."/>
            <person name="Lasa M."/>
            <person name="Polevoda B."/>
            <person name="Gazquez C."/>
            <person name="Elosegui-Artola A."/>
            <person name="Kim D.S."/>
            <person name="De Juan-Pardo E."/>
            <person name="Demeyer K."/>
            <person name="Hole K."/>
            <person name="Larrea E."/>
            <person name="Timmerman E."/>
            <person name="Prieto J."/>
            <person name="Arnesen T."/>
            <person name="Sherman F."/>
            <person name="Gevaert K."/>
            <person name="Aldabe R."/>
        </authorList>
    </citation>
    <scope>ACETYLATION [LARGE SCALE ANALYSIS] AT MET-1</scope>
    <scope>IDENTIFICATION BY MASS SPECTROMETRY [LARGE SCALE ANALYSIS]</scope>
</reference>
<reference key="11">
    <citation type="journal article" date="2014" name="J. Proteomics">
        <title>An enzyme assisted RP-RPLC approach for in-depth analysis of human liver phosphoproteome.</title>
        <authorList>
            <person name="Bian Y."/>
            <person name="Song C."/>
            <person name="Cheng K."/>
            <person name="Dong M."/>
            <person name="Wang F."/>
            <person name="Huang J."/>
            <person name="Sun D."/>
            <person name="Wang L."/>
            <person name="Ye M."/>
            <person name="Zou H."/>
        </authorList>
    </citation>
    <scope>PHOSPHORYLATION [LARGE SCALE ANALYSIS] AT SER-282; SER-286; SER-372; SER-373; TYR-376; SER-388; SER-493; SER-503; SER-504; THR-543 AND SER-576</scope>
    <scope>IDENTIFICATION BY MASS SPECTROMETRY [LARGE SCALE ANALYSIS]</scope>
    <source>
        <tissue>Liver</tissue>
    </source>
</reference>
<reference key="12">
    <citation type="submission" date="2004-02" db="PDB data bank">
        <title>Solution structure of the villin headpiece domain of human actin-binding LIM protein homologue (KIAA0843 protein).</title>
        <authorList>
            <consortium name="RIKEN structural genomics initiative (RSGI)"/>
        </authorList>
    </citation>
    <scope>STRUCTURE BY NMR OF 610-683</scope>
</reference>
<protein>
    <recommendedName>
        <fullName>Actin-binding LIM protein 3</fullName>
        <shortName>abLIM-3</shortName>
    </recommendedName>
    <alternativeName>
        <fullName>Actin-binding LIM protein family member 3</fullName>
    </alternativeName>
</protein>
<accession>O94929</accession>
<accession>A8K121</accession>
<accession>Q19VH3</accession>
<accession>Q658S1</accession>
<accession>Q68CI5</accession>
<accession>Q9BV32</accession>
<gene>
    <name type="primary">ABLIM3</name>
    <name type="synonym">KIAA0843</name>
    <name type="ORF">HMFN1661</name>
</gene>
<dbReference type="EMBL" id="DQ413174">
    <property type="protein sequence ID" value="ABD83327.1"/>
    <property type="molecule type" value="mRNA"/>
</dbReference>
<dbReference type="EMBL" id="AB020650">
    <property type="protein sequence ID" value="BAA74866.2"/>
    <property type="status" value="ALT_INIT"/>
    <property type="molecule type" value="mRNA"/>
</dbReference>
<dbReference type="EMBL" id="AK289736">
    <property type="protein sequence ID" value="BAF82425.1"/>
    <property type="molecule type" value="mRNA"/>
</dbReference>
<dbReference type="EMBL" id="AB075881">
    <property type="protein sequence ID" value="BAD38663.1"/>
    <property type="molecule type" value="mRNA"/>
</dbReference>
<dbReference type="EMBL" id="BC001665">
    <property type="protein sequence ID" value="AAH01665.1"/>
    <property type="molecule type" value="mRNA"/>
</dbReference>
<dbReference type="EMBL" id="AL833021">
    <property type="protein sequence ID" value="CAH56270.1"/>
    <property type="molecule type" value="mRNA"/>
</dbReference>
<dbReference type="CCDS" id="CCDS4294.1">
    <molecule id="O94929-1"/>
</dbReference>
<dbReference type="CCDS" id="CCDS78071.1">
    <molecule id="O94929-2"/>
</dbReference>
<dbReference type="CCDS" id="CCDS87335.1">
    <molecule id="O94929-3"/>
</dbReference>
<dbReference type="RefSeq" id="NP_001287944.1">
    <molecule id="O94929-1"/>
    <property type="nucleotide sequence ID" value="NM_001301015.3"/>
</dbReference>
<dbReference type="RefSeq" id="NP_001287947.1">
    <property type="nucleotide sequence ID" value="NM_001301018.2"/>
</dbReference>
<dbReference type="RefSeq" id="NP_001287956.1">
    <property type="nucleotide sequence ID" value="NM_001301027.2"/>
</dbReference>
<dbReference type="RefSeq" id="NP_001287957.1">
    <molecule id="O94929-2"/>
    <property type="nucleotide sequence ID" value="NM_001301028.3"/>
</dbReference>
<dbReference type="RefSeq" id="NP_001332787.1">
    <property type="nucleotide sequence ID" value="NM_001345858.1"/>
</dbReference>
<dbReference type="RefSeq" id="NP_001332788.1">
    <molecule id="O94929-3"/>
    <property type="nucleotide sequence ID" value="NM_001345859.2"/>
</dbReference>
<dbReference type="RefSeq" id="NP_001332789.1">
    <property type="nucleotide sequence ID" value="NM_001345860.1"/>
</dbReference>
<dbReference type="RefSeq" id="NP_001332790.1">
    <molecule id="O94929-3"/>
    <property type="nucleotide sequence ID" value="NM_001345861.2"/>
</dbReference>
<dbReference type="RefSeq" id="NP_055760.1">
    <molecule id="O94929-1"/>
    <property type="nucleotide sequence ID" value="NM_014945.5"/>
</dbReference>
<dbReference type="PDB" id="1UJS">
    <property type="method" value="NMR"/>
    <property type="chains" value="A=609-683"/>
</dbReference>
<dbReference type="PDB" id="2DJ7">
    <property type="method" value="NMR"/>
    <property type="chains" value="A=141-207"/>
</dbReference>
<dbReference type="PDBsum" id="1UJS"/>
<dbReference type="PDBsum" id="2DJ7"/>
<dbReference type="BMRB" id="O94929"/>
<dbReference type="SMR" id="O94929"/>
<dbReference type="BioGRID" id="116552">
    <property type="interactions" value="39"/>
</dbReference>
<dbReference type="FunCoup" id="O94929">
    <property type="interactions" value="272"/>
</dbReference>
<dbReference type="IntAct" id="O94929">
    <property type="interactions" value="38"/>
</dbReference>
<dbReference type="MINT" id="O94929"/>
<dbReference type="STRING" id="9606.ENSP00000425394"/>
<dbReference type="CarbonylDB" id="O94929"/>
<dbReference type="GlyCosmos" id="O94929">
    <property type="glycosylation" value="4 sites, 1 glycan"/>
</dbReference>
<dbReference type="GlyGen" id="O94929">
    <property type="glycosylation" value="4 sites, 1 O-linked glycan (4 sites)"/>
</dbReference>
<dbReference type="iPTMnet" id="O94929"/>
<dbReference type="PhosphoSitePlus" id="O94929"/>
<dbReference type="BioMuta" id="ABLIM3"/>
<dbReference type="jPOST" id="O94929"/>
<dbReference type="MassIVE" id="O94929"/>
<dbReference type="PaxDb" id="9606-ENSP00000425394"/>
<dbReference type="PeptideAtlas" id="O94929"/>
<dbReference type="ProteomicsDB" id="50565">
    <molecule id="O94929-1"/>
</dbReference>
<dbReference type="ProteomicsDB" id="50566">
    <molecule id="O94929-2"/>
</dbReference>
<dbReference type="ProteomicsDB" id="50567">
    <molecule id="O94929-3"/>
</dbReference>
<dbReference type="ProteomicsDB" id="50568">
    <molecule id="O94929-4"/>
</dbReference>
<dbReference type="Antibodypedia" id="1195">
    <property type="antibodies" value="155 antibodies from 23 providers"/>
</dbReference>
<dbReference type="DNASU" id="22885"/>
<dbReference type="Ensembl" id="ENST00000309868.12">
    <molecule id="O94929-1"/>
    <property type="protein sequence ID" value="ENSP00000310309.7"/>
    <property type="gene ID" value="ENSG00000173210.21"/>
</dbReference>
<dbReference type="Ensembl" id="ENST00000326685.11">
    <molecule id="O94929-3"/>
    <property type="protein sequence ID" value="ENSP00000315841.7"/>
    <property type="gene ID" value="ENSG00000173210.21"/>
</dbReference>
<dbReference type="Ensembl" id="ENST00000504238.5">
    <molecule id="O94929-2"/>
    <property type="protein sequence ID" value="ENSP00000421183.1"/>
    <property type="gene ID" value="ENSG00000173210.21"/>
</dbReference>
<dbReference type="Ensembl" id="ENST00000506113.5">
    <molecule id="O94929-1"/>
    <property type="protein sequence ID" value="ENSP00000425394.1"/>
    <property type="gene ID" value="ENSG00000173210.21"/>
</dbReference>
<dbReference type="Ensembl" id="ENST00000517451.5">
    <molecule id="O94929-4"/>
    <property type="protein sequence ID" value="ENSP00000430150.1"/>
    <property type="gene ID" value="ENSG00000173210.21"/>
</dbReference>
<dbReference type="GeneID" id="22885"/>
<dbReference type="KEGG" id="hsa:22885"/>
<dbReference type="MANE-Select" id="ENST00000309868.12">
    <property type="protein sequence ID" value="ENSP00000310309.7"/>
    <property type="RefSeq nucleotide sequence ID" value="NM_014945.5"/>
    <property type="RefSeq protein sequence ID" value="NP_055760.1"/>
</dbReference>
<dbReference type="UCSC" id="uc003lpy.3">
    <molecule id="O94929-1"/>
    <property type="organism name" value="human"/>
</dbReference>
<dbReference type="AGR" id="HGNC:29132"/>
<dbReference type="CTD" id="22885"/>
<dbReference type="DisGeNET" id="22885"/>
<dbReference type="GeneCards" id="ABLIM3"/>
<dbReference type="HGNC" id="HGNC:29132">
    <property type="gene designation" value="ABLIM3"/>
</dbReference>
<dbReference type="HPA" id="ENSG00000173210">
    <property type="expression patterns" value="Tissue enhanced (liver)"/>
</dbReference>
<dbReference type="MIM" id="611305">
    <property type="type" value="gene"/>
</dbReference>
<dbReference type="neXtProt" id="NX_O94929"/>
<dbReference type="OpenTargets" id="ENSG00000173210"/>
<dbReference type="PharmGKB" id="PA134962761"/>
<dbReference type="VEuPathDB" id="HostDB:ENSG00000173210"/>
<dbReference type="eggNOG" id="KOG1044">
    <property type="taxonomic scope" value="Eukaryota"/>
</dbReference>
<dbReference type="GeneTree" id="ENSGT00950000182850"/>
<dbReference type="InParanoid" id="O94929"/>
<dbReference type="OMA" id="NNHFHIQ"/>
<dbReference type="OrthoDB" id="1746725at2759"/>
<dbReference type="PAN-GO" id="O94929">
    <property type="GO annotations" value="5 GO annotations based on evolutionary models"/>
</dbReference>
<dbReference type="PhylomeDB" id="O94929"/>
<dbReference type="TreeFam" id="TF318042"/>
<dbReference type="PathwayCommons" id="O94929"/>
<dbReference type="Reactome" id="R-HSA-418885">
    <property type="pathway name" value="DCC mediated attractive signaling"/>
</dbReference>
<dbReference type="SignaLink" id="O94929"/>
<dbReference type="BioGRID-ORCS" id="22885">
    <property type="hits" value="12 hits in 1154 CRISPR screens"/>
</dbReference>
<dbReference type="CD-CODE" id="FB4E32DD">
    <property type="entry name" value="Presynaptic clusters and postsynaptic densities"/>
</dbReference>
<dbReference type="ChiTaRS" id="ABLIM3">
    <property type="organism name" value="human"/>
</dbReference>
<dbReference type="EvolutionaryTrace" id="O94929"/>
<dbReference type="GeneWiki" id="ABLIM3"/>
<dbReference type="GenomeRNAi" id="22885"/>
<dbReference type="Pharos" id="O94929">
    <property type="development level" value="Tbio"/>
</dbReference>
<dbReference type="PRO" id="PR:O94929"/>
<dbReference type="Proteomes" id="UP000005640">
    <property type="component" value="Chromosome 5"/>
</dbReference>
<dbReference type="RNAct" id="O94929">
    <property type="molecule type" value="protein"/>
</dbReference>
<dbReference type="Bgee" id="ENSG00000173210">
    <property type="expression patterns" value="Expressed in lower esophagus mucosa and 189 other cell types or tissues"/>
</dbReference>
<dbReference type="ExpressionAtlas" id="O94929">
    <property type="expression patterns" value="baseline and differential"/>
</dbReference>
<dbReference type="GO" id="GO:0015629">
    <property type="term" value="C:actin cytoskeleton"/>
    <property type="evidence" value="ECO:0000318"/>
    <property type="project" value="GO_Central"/>
</dbReference>
<dbReference type="GO" id="GO:0005737">
    <property type="term" value="C:cytoplasm"/>
    <property type="evidence" value="ECO:0007669"/>
    <property type="project" value="UniProtKB-SubCell"/>
</dbReference>
<dbReference type="GO" id="GO:0098978">
    <property type="term" value="C:glutamatergic synapse"/>
    <property type="evidence" value="ECO:0007669"/>
    <property type="project" value="Ensembl"/>
</dbReference>
<dbReference type="GO" id="GO:0030027">
    <property type="term" value="C:lamellipodium"/>
    <property type="evidence" value="ECO:0000314"/>
    <property type="project" value="MGI"/>
</dbReference>
<dbReference type="GO" id="GO:0001725">
    <property type="term" value="C:stress fiber"/>
    <property type="evidence" value="ECO:0000314"/>
    <property type="project" value="MGI"/>
</dbReference>
<dbReference type="GO" id="GO:0051015">
    <property type="term" value="F:actin filament binding"/>
    <property type="evidence" value="ECO:0000318"/>
    <property type="project" value="GO_Central"/>
</dbReference>
<dbReference type="GO" id="GO:0046872">
    <property type="term" value="F:metal ion binding"/>
    <property type="evidence" value="ECO:0007669"/>
    <property type="project" value="UniProtKB-KW"/>
</dbReference>
<dbReference type="GO" id="GO:0060271">
    <property type="term" value="P:cilium assembly"/>
    <property type="evidence" value="ECO:0000315"/>
    <property type="project" value="MGI"/>
</dbReference>
<dbReference type="GO" id="GO:0007010">
    <property type="term" value="P:cytoskeleton organization"/>
    <property type="evidence" value="ECO:0007669"/>
    <property type="project" value="InterPro"/>
</dbReference>
<dbReference type="GO" id="GO:0030032">
    <property type="term" value="P:lamellipodium assembly"/>
    <property type="evidence" value="ECO:0000315"/>
    <property type="project" value="MGI"/>
</dbReference>
<dbReference type="GO" id="GO:1903955">
    <property type="term" value="P:positive regulation of protein targeting to mitochondrion"/>
    <property type="evidence" value="ECO:0007001"/>
    <property type="project" value="ParkinsonsUK-UCL"/>
</dbReference>
<dbReference type="GO" id="GO:0045944">
    <property type="term" value="P:positive regulation of transcription by RNA polymerase II"/>
    <property type="evidence" value="ECO:0007669"/>
    <property type="project" value="Ensembl"/>
</dbReference>
<dbReference type="GO" id="GO:0006366">
    <property type="term" value="P:transcription by RNA polymerase II"/>
    <property type="evidence" value="ECO:0007669"/>
    <property type="project" value="Ensembl"/>
</dbReference>
<dbReference type="CDD" id="cd09327">
    <property type="entry name" value="LIM1_abLIM"/>
    <property type="match status" value="1"/>
</dbReference>
<dbReference type="CDD" id="cd09328">
    <property type="entry name" value="LIM2_abLIM"/>
    <property type="match status" value="1"/>
</dbReference>
<dbReference type="CDD" id="cd09329">
    <property type="entry name" value="LIM3_abLIM"/>
    <property type="match status" value="1"/>
</dbReference>
<dbReference type="CDD" id="cd09330">
    <property type="entry name" value="LIM4_abLIM"/>
    <property type="match status" value="1"/>
</dbReference>
<dbReference type="FunFam" id="2.10.110.10:FF:000003">
    <property type="entry name" value="actin-binding LIM protein 1 isoform X1"/>
    <property type="match status" value="1"/>
</dbReference>
<dbReference type="FunFam" id="2.10.110.10:FF:000004">
    <property type="entry name" value="actin-binding LIM protein 1 isoform X1"/>
    <property type="match status" value="1"/>
</dbReference>
<dbReference type="FunFam" id="2.10.110.10:FF:000007">
    <property type="entry name" value="actin-binding LIM protein 1 isoform X1"/>
    <property type="match status" value="1"/>
</dbReference>
<dbReference type="FunFam" id="2.10.110.10:FF:000024">
    <property type="entry name" value="actin-binding LIM protein 1 isoform X1"/>
    <property type="match status" value="1"/>
</dbReference>
<dbReference type="FunFam" id="1.10.950.10:FF:000001">
    <property type="entry name" value="actin-binding LIM protein 1 isoform X2"/>
    <property type="match status" value="1"/>
</dbReference>
<dbReference type="Gene3D" id="2.10.110.10">
    <property type="entry name" value="Cysteine Rich Protein"/>
    <property type="match status" value="4"/>
</dbReference>
<dbReference type="Gene3D" id="1.10.950.10">
    <property type="entry name" value="Villin headpiece domain"/>
    <property type="match status" value="1"/>
</dbReference>
<dbReference type="InterPro" id="IPR032402">
    <property type="entry name" value="AbLIM_anchor"/>
</dbReference>
<dbReference type="InterPro" id="IPR051618">
    <property type="entry name" value="Actin-binding_LIM"/>
</dbReference>
<dbReference type="InterPro" id="IPR003128">
    <property type="entry name" value="Villin_headpiece"/>
</dbReference>
<dbReference type="InterPro" id="IPR036886">
    <property type="entry name" value="Villin_headpiece_dom_sf"/>
</dbReference>
<dbReference type="InterPro" id="IPR001781">
    <property type="entry name" value="Znf_LIM"/>
</dbReference>
<dbReference type="PANTHER" id="PTHR24213">
    <property type="entry name" value="ACTIN-BINDING LIM PROTEIN"/>
    <property type="match status" value="1"/>
</dbReference>
<dbReference type="PANTHER" id="PTHR24213:SF0">
    <property type="entry name" value="ACTIN-BINDING LIM PROTEIN 3"/>
    <property type="match status" value="1"/>
</dbReference>
<dbReference type="Pfam" id="PF16182">
    <property type="entry name" value="AbLIM_anchor"/>
    <property type="match status" value="1"/>
</dbReference>
<dbReference type="Pfam" id="PF00412">
    <property type="entry name" value="LIM"/>
    <property type="match status" value="4"/>
</dbReference>
<dbReference type="Pfam" id="PF02209">
    <property type="entry name" value="VHP"/>
    <property type="match status" value="1"/>
</dbReference>
<dbReference type="SMART" id="SM00132">
    <property type="entry name" value="LIM"/>
    <property type="match status" value="4"/>
</dbReference>
<dbReference type="SMART" id="SM00153">
    <property type="entry name" value="VHP"/>
    <property type="match status" value="1"/>
</dbReference>
<dbReference type="SUPFAM" id="SSF57716">
    <property type="entry name" value="Glucocorticoid receptor-like (DNA-binding domain)"/>
    <property type="match status" value="6"/>
</dbReference>
<dbReference type="SUPFAM" id="SSF47050">
    <property type="entry name" value="VHP, Villin headpiece domain"/>
    <property type="match status" value="1"/>
</dbReference>
<dbReference type="PROSITE" id="PS51089">
    <property type="entry name" value="HP"/>
    <property type="match status" value="1"/>
</dbReference>
<dbReference type="PROSITE" id="PS00478">
    <property type="entry name" value="LIM_DOMAIN_1"/>
    <property type="match status" value="4"/>
</dbReference>
<dbReference type="PROSITE" id="PS50023">
    <property type="entry name" value="LIM_DOMAIN_2"/>
    <property type="match status" value="4"/>
</dbReference>
<feature type="chain" id="PRO_0000075702" description="Actin-binding LIM protein 3">
    <location>
        <begin position="1"/>
        <end position="683"/>
    </location>
</feature>
<feature type="domain" description="LIM zinc-binding 1" evidence="3">
    <location>
        <begin position="21"/>
        <end position="80"/>
    </location>
</feature>
<feature type="domain" description="LIM zinc-binding 2" evidence="3">
    <location>
        <begin position="80"/>
        <end position="140"/>
    </location>
</feature>
<feature type="domain" description="LIM zinc-binding 3" evidence="3">
    <location>
        <begin position="149"/>
        <end position="208"/>
    </location>
</feature>
<feature type="domain" description="LIM zinc-binding 4" evidence="3">
    <location>
        <begin position="208"/>
        <end position="268"/>
    </location>
</feature>
<feature type="domain" description="HP" evidence="4">
    <location>
        <begin position="615"/>
        <end position="683"/>
    </location>
</feature>
<feature type="region of interest" description="Disordered" evidence="5">
    <location>
        <begin position="372"/>
        <end position="472"/>
    </location>
</feature>
<feature type="compositionally biased region" description="Polar residues" evidence="5">
    <location>
        <begin position="380"/>
        <end position="393"/>
    </location>
</feature>
<feature type="compositionally biased region" description="Polar residues" evidence="5">
    <location>
        <begin position="406"/>
        <end position="426"/>
    </location>
</feature>
<feature type="compositionally biased region" description="Polar residues" evidence="5">
    <location>
        <begin position="454"/>
        <end position="471"/>
    </location>
</feature>
<feature type="modified residue" description="N-acetylmethionine" evidence="14">
    <location>
        <position position="1"/>
    </location>
</feature>
<feature type="modified residue" description="Phosphoserine" evidence="2">
    <location>
        <position position="277"/>
    </location>
</feature>
<feature type="modified residue" description="Phosphoserine" evidence="2">
    <location>
        <position position="280"/>
    </location>
</feature>
<feature type="modified residue" description="Phosphoserine" evidence="15">
    <location>
        <position position="282"/>
    </location>
</feature>
<feature type="modified residue" description="Phosphoserine" evidence="15">
    <location>
        <position position="286"/>
    </location>
</feature>
<feature type="modified residue" description="Phosphoserine" evidence="2">
    <location>
        <position position="290"/>
    </location>
</feature>
<feature type="modified residue" description="Phosphoserine" evidence="2">
    <location>
        <position position="337"/>
    </location>
</feature>
<feature type="modified residue" description="Phosphoserine" evidence="15">
    <location>
        <position position="372"/>
    </location>
</feature>
<feature type="modified residue" description="Phosphoserine" evidence="15">
    <location>
        <position position="373"/>
    </location>
</feature>
<feature type="modified residue" description="Phosphotyrosine" evidence="15">
    <location>
        <position position="376"/>
    </location>
</feature>
<feature type="modified residue" description="Phosphoserine" evidence="2">
    <location>
        <position position="379"/>
    </location>
</feature>
<feature type="modified residue" description="Phosphoserine" evidence="15">
    <location>
        <position position="388"/>
    </location>
</feature>
<feature type="modified residue" description="Phosphoserine" evidence="15">
    <location>
        <position position="493"/>
    </location>
</feature>
<feature type="modified residue" description="Phosphoserine" evidence="12 13 15">
    <location>
        <position position="503"/>
    </location>
</feature>
<feature type="modified residue" description="Phosphoserine" evidence="12 13 15">
    <location>
        <position position="504"/>
    </location>
</feature>
<feature type="modified residue" description="Phosphothreonine" evidence="15">
    <location>
        <position position="543"/>
    </location>
</feature>
<feature type="modified residue" description="Phosphoserine" evidence="2">
    <location>
        <position position="567"/>
    </location>
</feature>
<feature type="modified residue" description="Phosphoserine" evidence="15">
    <location>
        <position position="576"/>
    </location>
</feature>
<feature type="modified residue" description="Phosphoserine" evidence="2">
    <location>
        <position position="607"/>
    </location>
</feature>
<feature type="modified residue" description="Omega-N-methylarginine" evidence="2">
    <location>
        <position position="631"/>
    </location>
</feature>
<feature type="splice variant" id="VSP_012126" description="In isoform 4." evidence="7">
    <location>
        <begin position="1"/>
        <end position="514"/>
    </location>
</feature>
<feature type="splice variant" id="VSP_012127" description="In isoform 2 and isoform 3." evidence="8 9 10">
    <location>
        <begin position="297"/>
        <end position="358"/>
    </location>
</feature>
<feature type="splice variant" id="VSP_012128" description="In isoform 2." evidence="8">
    <location>
        <begin position="402"/>
        <end position="450"/>
    </location>
</feature>
<feature type="splice variant" id="VSP_012129" description="In isoform 3." evidence="9 10">
    <location>
        <begin position="402"/>
        <end position="434"/>
    </location>
</feature>
<feature type="splice variant" id="VSP_012130" description="In isoform 2." evidence="8">
    <original>RHLSQEEFYQVFGMTISEFDRLALWKRNELKKQARLF</original>
    <variation>GNFWKSGCL</variation>
    <location>
        <begin position="647"/>
        <end position="683"/>
    </location>
</feature>
<feature type="sequence variant" id="VAR_050143" description="In dbSNP:rs35907283.">
    <original>G</original>
    <variation>D</variation>
    <location>
        <position position="125"/>
    </location>
</feature>
<feature type="sequence conflict" description="In Ref. 3; BAF82425." evidence="11" ref="3">
    <original>K</original>
    <variation>R</variation>
    <location>
        <position position="227"/>
    </location>
</feature>
<feature type="turn" evidence="17">
    <location>
        <begin position="152"/>
        <end position="154"/>
    </location>
</feature>
<feature type="strand" evidence="17">
    <location>
        <begin position="159"/>
        <end position="161"/>
    </location>
</feature>
<feature type="strand" evidence="17">
    <location>
        <begin position="164"/>
        <end position="166"/>
    </location>
</feature>
<feature type="strand" evidence="17">
    <location>
        <begin position="169"/>
        <end position="171"/>
    </location>
</feature>
<feature type="turn" evidence="17">
    <location>
        <begin position="173"/>
        <end position="175"/>
    </location>
</feature>
<feature type="strand" evidence="17">
    <location>
        <begin position="179"/>
        <end position="181"/>
    </location>
</feature>
<feature type="strand" evidence="17">
    <location>
        <begin position="190"/>
        <end position="192"/>
    </location>
</feature>
<feature type="strand" evidence="17">
    <location>
        <begin position="195"/>
        <end position="197"/>
    </location>
</feature>
<feature type="helix" evidence="17">
    <location>
        <begin position="201"/>
        <end position="205"/>
    </location>
</feature>
<feature type="turn" evidence="16">
    <location>
        <begin position="623"/>
        <end position="626"/>
    </location>
</feature>
<feature type="turn" evidence="16">
    <location>
        <begin position="630"/>
        <end position="633"/>
    </location>
</feature>
<feature type="turn" evidence="16">
    <location>
        <begin position="642"/>
        <end position="644"/>
    </location>
</feature>
<feature type="helix" evidence="16">
    <location>
        <begin position="645"/>
        <end position="648"/>
    </location>
</feature>
<feature type="helix" evidence="16">
    <location>
        <begin position="653"/>
        <end position="658"/>
    </location>
</feature>
<feature type="helix" evidence="16">
    <location>
        <begin position="662"/>
        <end position="665"/>
    </location>
</feature>
<feature type="helix" evidence="16">
    <location>
        <begin position="670"/>
        <end position="679"/>
    </location>
</feature>
<sequence length="683" mass="77802">MNTSIPYQQNPYNPRGSSNVIQCYRCGDTCKGEVVRVHNNHFHIRCFTCQVCGCGLAQSGFFFKNQEYICTQDYQQLYGTRCDSCRDFITGEVISALGRTYHPKCFVCSLCRKPFPIGDKVTFSGKECVCQTCSQSMASSKPIKIRGPSHCAGCKEEIKHGQSLLALDKQWHVSCFKCQTCSVILTGEYISKDGVPYCESDYHAQFGIKCETCDRYISGRVLEAGGKHYHPTCARCVRCHQMFTEGEEMYLTGSEVWHPICKQAARAEKKLKHRRTSETSISPPGSSIGSPNRVICAKVDNEILNYKDLAALPKVKSIYEVQRPDLISYEPHSRYMSDEMLERCGYGESLGTLSPYSQDIYENLDLRQRRASSPGYIDSPTYSRQGMSPTFSRSPHHYYRSGPESGRSSPYHSQLDVRSSTPTSYQAPKHFHIPAGDSNIYRKPPIYKRHGDLSTATKSKTSEDISQTSKYSPIYSPDPYYASESEYWTYHGSPKVPRARRFSSGGEEDDFDRSMHKLQSGIGRLILKEEMKARSSSYADPWTPPRSSTSSREALHTAGYEMSLNGSPRSHYLADSDPLISKSASLPAYRRNGLHRTPSADLFHYDSMNAVNWGMREYKIYPYELLLVTTRGRNRLPKDVDRTRLERHLSQEEFYQVFGMTISEFDRLALWKRNELKKQARLF</sequence>
<comment type="function">
    <text evidence="6">May act as scaffold protein. May stimulate ABRA activity and ABRA-dependent SRF transcriptional activity.</text>
</comment>
<comment type="subunit">
    <text evidence="6">Directly interacts with F-actin and ABRA.</text>
</comment>
<comment type="interaction">
    <interactant intactId="EBI-351267">
        <id>O94929</id>
    </interactant>
    <interactant intactId="EBI-747204">
        <id>Q9UKT9</id>
        <label>IKZF3</label>
    </interactant>
    <organismsDiffer>false</organismsDiffer>
    <experiments>4</experiments>
</comment>
<comment type="interaction">
    <interactant intactId="EBI-351267">
        <id>O94929</id>
    </interactant>
    <interactant intactId="EBI-2212028">
        <id>Q9Y2D8</id>
        <label>SSX2IP</label>
    </interactant>
    <organismsDiffer>false</organismsDiffer>
    <experiments>3</experiments>
</comment>
<comment type="interaction">
    <interactant intactId="EBI-11961672">
        <id>O94929-2</id>
    </interactant>
    <interactant intactId="EBI-11096309">
        <id>Q9NYB9-2</id>
        <label>ABI2</label>
    </interactant>
    <organismsDiffer>false</organismsDiffer>
    <experiments>3</experiments>
</comment>
<comment type="interaction">
    <interactant intactId="EBI-11961672">
        <id>O94929-2</id>
    </interactant>
    <interactant intactId="EBI-11524452">
        <id>Q8N9N5-2</id>
        <label>BANP</label>
    </interactant>
    <organismsDiffer>false</organismsDiffer>
    <experiments>3</experiments>
</comment>
<comment type="interaction">
    <interactant intactId="EBI-11961672">
        <id>O94929-2</id>
    </interactant>
    <interactant intactId="EBI-744545">
        <id>Q8NEC5</id>
        <label>CATSPER1</label>
    </interactant>
    <organismsDiffer>false</organismsDiffer>
    <experiments>3</experiments>
</comment>
<comment type="interaction">
    <interactant intactId="EBI-11961672">
        <id>O94929-2</id>
    </interactant>
    <interactant intactId="EBI-712912">
        <id>Q9HC52</id>
        <label>CBX8</label>
    </interactant>
    <organismsDiffer>false</organismsDiffer>
    <experiments>3</experiments>
</comment>
<comment type="interaction">
    <interactant intactId="EBI-11961672">
        <id>O94929-2</id>
    </interactant>
    <interactant intactId="EBI-5453285">
        <id>Q2TBE0</id>
        <label>CWF19L2</label>
    </interactant>
    <organismsDiffer>false</organismsDiffer>
    <experiments>3</experiments>
</comment>
<comment type="interaction">
    <interactant intactId="EBI-11961672">
        <id>O94929-2</id>
    </interactant>
    <interactant intactId="EBI-6137602">
        <id>Q53FT3</id>
        <label>HIKESHI</label>
    </interactant>
    <organismsDiffer>false</organismsDiffer>
    <experiments>3</experiments>
</comment>
<comment type="interaction">
    <interactant intactId="EBI-11961672">
        <id>O94929-2</id>
    </interactant>
    <interactant intactId="EBI-747204">
        <id>Q9UKT9</id>
        <label>IKZF3</label>
    </interactant>
    <organismsDiffer>false</organismsDiffer>
    <experiments>3</experiments>
</comment>
<comment type="interaction">
    <interactant intactId="EBI-11961672">
        <id>O94929-2</id>
    </interactant>
    <interactant intactId="EBI-2811699">
        <id>Q9NP74</id>
        <label>PALMD</label>
    </interactant>
    <organismsDiffer>false</organismsDiffer>
    <experiments>3</experiments>
</comment>
<comment type="interaction">
    <interactant intactId="EBI-11961672">
        <id>O94929-2</id>
    </interactant>
    <interactant intactId="EBI-632715">
        <id>Q13573</id>
        <label>SNW1</label>
    </interactant>
    <organismsDiffer>false</organismsDiffer>
    <experiments>3</experiments>
</comment>
<comment type="interaction">
    <interactant intactId="EBI-11961672">
        <id>O94929-2</id>
    </interactant>
    <interactant intactId="EBI-1105213">
        <id>Q9UBB9</id>
        <label>TFIP11</label>
    </interactant>
    <organismsDiffer>false</organismsDiffer>
    <experiments>3</experiments>
</comment>
<comment type="interaction">
    <interactant intactId="EBI-11961672">
        <id>O94929-2</id>
    </interactant>
    <interactant intactId="EBI-4395669">
        <id>Q6ZNG0</id>
        <label>ZNF620</label>
    </interactant>
    <organismsDiffer>false</organismsDiffer>
    <experiments>3</experiments>
</comment>
<comment type="subcellular location">
    <subcellularLocation>
        <location evidence="1">Cytoplasm</location>
    </subcellularLocation>
</comment>
<comment type="alternative products">
    <event type="alternative splicing"/>
    <isoform>
        <id>O94929-1</id>
        <name>1</name>
        <sequence type="displayed"/>
    </isoform>
    <isoform>
        <id>O94929-2</id>
        <name>2</name>
        <sequence type="described" ref="VSP_012127 VSP_012128 VSP_012130"/>
    </isoform>
    <isoform>
        <id>O94929-3</id>
        <name>3</name>
        <sequence type="described" ref="VSP_012127 VSP_012129"/>
    </isoform>
    <isoform>
        <id>O94929-4</id>
        <name>4</name>
        <sequence type="described" ref="VSP_012126"/>
    </isoform>
</comment>
<comment type="tissue specificity">
    <text evidence="6">Expressed predominantly in heart and brain.</text>
</comment>
<comment type="sequence caution" evidence="11">
    <conflict type="erroneous initiation">
        <sequence resource="EMBL-CDS" id="BAA74866"/>
    </conflict>
</comment>
<name>ABLM3_HUMAN</name>